<organism>
    <name type="scientific">Pinus halepensis</name>
    <name type="common">Aleppo pine</name>
    <dbReference type="NCBI Taxonomy" id="71633"/>
    <lineage>
        <taxon>Eukaryota</taxon>
        <taxon>Viridiplantae</taxon>
        <taxon>Streptophyta</taxon>
        <taxon>Embryophyta</taxon>
        <taxon>Tracheophyta</taxon>
        <taxon>Spermatophyta</taxon>
        <taxon>Pinopsida</taxon>
        <taxon>Pinidae</taxon>
        <taxon>Conifers I</taxon>
        <taxon>Pinales</taxon>
        <taxon>Pinaceae</taxon>
        <taxon>Pinus</taxon>
        <taxon>Pinus subgen. Pinus</taxon>
    </lineage>
</organism>
<reference evidence="4" key="1">
    <citation type="journal article" date="2009" name="J. Plant Physiol.">
        <title>Analysis of the soluble cell wall proteome of gymnosperms.</title>
        <authorList>
            <person name="Uzal E.N."/>
            <person name="Gomez-Ros L.V."/>
            <person name="Hernandez J.A."/>
            <person name="Pedreno M.A."/>
            <person name="Cuello J."/>
            <person name="Ros Barcelo A."/>
        </authorList>
    </citation>
    <scope>PROTEIN SEQUENCE</scope>
    <scope>SUBCELLULAR LOCATION</scope>
    <source>
        <strain evidence="2">PC-801</strain>
        <tissue evidence="2">Callus</tissue>
    </source>
</reference>
<evidence type="ECO:0000255" key="1"/>
<evidence type="ECO:0000269" key="2">
    <source>
    </source>
</evidence>
<evidence type="ECO:0000303" key="3">
    <source>
    </source>
</evidence>
<evidence type="ECO:0000305" key="4"/>
<sequence length="8" mass="1007">TYNNNLIR</sequence>
<feature type="chain" id="PRO_0000326461" description="Glucan endo-1,3-beta-glucosidase">
    <location>
        <begin position="1" status="less than"/>
        <end position="8" status="greater than"/>
    </location>
</feature>
<feature type="non-terminal residue" evidence="3">
    <location>
        <position position="1"/>
    </location>
</feature>
<feature type="non-terminal residue" evidence="3">
    <location>
        <position position="8"/>
    </location>
</feature>
<comment type="catalytic activity">
    <reaction>
        <text>Hydrolysis of (1-&gt;3)-beta-D-glucosidic linkages in (1-&gt;3)-beta-D-glucans.</text>
        <dbReference type="EC" id="3.2.1.39"/>
    </reaction>
</comment>
<comment type="subcellular location">
    <subcellularLocation>
        <location evidence="2">Secreted</location>
        <location evidence="2">Cell wall</location>
    </subcellularLocation>
</comment>
<comment type="similarity">
    <text evidence="1">Belongs to the glycosyl hydrolase 17 family.</text>
</comment>
<dbReference type="EC" id="3.2.1.39"/>
<dbReference type="GO" id="GO:0005576">
    <property type="term" value="C:extracellular region"/>
    <property type="evidence" value="ECO:0007669"/>
    <property type="project" value="UniProtKB-KW"/>
</dbReference>
<dbReference type="GO" id="GO:0042973">
    <property type="term" value="F:glucan endo-1,3-beta-D-glucosidase activity"/>
    <property type="evidence" value="ECO:0007669"/>
    <property type="project" value="UniProtKB-EC"/>
</dbReference>
<keyword id="KW-0134">Cell wall</keyword>
<keyword id="KW-0903">Direct protein sequencing</keyword>
<keyword id="KW-0326">Glycosidase</keyword>
<keyword id="KW-0378">Hydrolase</keyword>
<keyword id="KW-0964">Secreted</keyword>
<protein>
    <recommendedName>
        <fullName>Glucan endo-1,3-beta-glucosidase</fullName>
        <ecNumber>3.2.1.39</ecNumber>
    </recommendedName>
    <alternativeName>
        <fullName>(1-&gt;3)-beta-glucan endohydrolase</fullName>
        <shortName>(1-&gt;3)-beta-glucanase</shortName>
    </alternativeName>
    <alternativeName>
        <fullName>Beta-1,3-endoglucanase</fullName>
    </alternativeName>
</protein>
<accession>P85483</accession>
<name>E13B_PINHA</name>
<proteinExistence type="evidence at protein level"/>